<keyword id="KW-0963">Cytoplasm</keyword>
<keyword id="KW-0460">Magnesium</keyword>
<keyword id="KW-0479">Metal-binding</keyword>
<keyword id="KW-0566">Pantothenate biosynthesis</keyword>
<keyword id="KW-0808">Transferase</keyword>
<organism>
    <name type="scientific">Psychrobacter cryohalolentis (strain ATCC BAA-1226 / DSM 17306 / VKM B-2378 / K5)</name>
    <dbReference type="NCBI Taxonomy" id="335284"/>
    <lineage>
        <taxon>Bacteria</taxon>
        <taxon>Pseudomonadati</taxon>
        <taxon>Pseudomonadota</taxon>
        <taxon>Gammaproteobacteria</taxon>
        <taxon>Moraxellales</taxon>
        <taxon>Moraxellaceae</taxon>
        <taxon>Psychrobacter</taxon>
    </lineage>
</organism>
<comment type="function">
    <text evidence="1">Catalyzes the reversible reaction in which hydroxymethyl group from 5,10-methylenetetrahydrofolate is transferred onto alpha-ketoisovalerate to form ketopantoate.</text>
</comment>
<comment type="catalytic activity">
    <reaction evidence="1">
        <text>3-methyl-2-oxobutanoate + (6R)-5,10-methylene-5,6,7,8-tetrahydrofolate + H2O = 2-dehydropantoate + (6S)-5,6,7,8-tetrahydrofolate</text>
        <dbReference type="Rhea" id="RHEA:11824"/>
        <dbReference type="ChEBI" id="CHEBI:11561"/>
        <dbReference type="ChEBI" id="CHEBI:11851"/>
        <dbReference type="ChEBI" id="CHEBI:15377"/>
        <dbReference type="ChEBI" id="CHEBI:15636"/>
        <dbReference type="ChEBI" id="CHEBI:57453"/>
        <dbReference type="EC" id="2.1.2.11"/>
    </reaction>
</comment>
<comment type="cofactor">
    <cofactor evidence="1">
        <name>Mg(2+)</name>
        <dbReference type="ChEBI" id="CHEBI:18420"/>
    </cofactor>
    <text evidence="1">Binds 1 Mg(2+) ion per subunit.</text>
</comment>
<comment type="pathway">
    <text evidence="1">Cofactor biosynthesis; (R)-pantothenate biosynthesis; (R)-pantoate from 3-methyl-2-oxobutanoate: step 1/2.</text>
</comment>
<comment type="subunit">
    <text evidence="1">Homodecamer; pentamer of dimers.</text>
</comment>
<comment type="subcellular location">
    <subcellularLocation>
        <location evidence="1">Cytoplasm</location>
    </subcellularLocation>
</comment>
<comment type="similarity">
    <text evidence="1">Belongs to the PanB family.</text>
</comment>
<gene>
    <name evidence="1" type="primary">panB</name>
    <name type="ordered locus">Pcryo_0125</name>
</gene>
<sequence length="266" mass="28483">MTTLSTLNKFKKDGTKFTCLTCYDAMFARMMEKAQIDTILIGDSLGMVVQGHDSTLPVTVDDMAYHTANIARSNKQALILADLPFMSYVTLPEAVVNSRKLMQAGAHVIKIEGGCELCELITTLAQAGTPTCVHLGLTPQSVNVFGGYKVQGRGNEAGQKLLDDAKAVVDAGAALLVLECVPAELAKAVTEAVAVPVIGIGAGADTDGQVLVMHDMLGMVHGRAPRFIHDFLTDERNTEHSIEGAFALYQQSVKEGSFPTEQHQFS</sequence>
<feature type="chain" id="PRO_0000297344" description="3-methyl-2-oxobutanoate hydroxymethyltransferase">
    <location>
        <begin position="1"/>
        <end position="266"/>
    </location>
</feature>
<feature type="active site" description="Proton acceptor" evidence="1">
    <location>
        <position position="179"/>
    </location>
</feature>
<feature type="binding site" evidence="1">
    <location>
        <begin position="43"/>
        <end position="44"/>
    </location>
    <ligand>
        <name>3-methyl-2-oxobutanoate</name>
        <dbReference type="ChEBI" id="CHEBI:11851"/>
    </ligand>
</feature>
<feature type="binding site" evidence="1">
    <location>
        <position position="43"/>
    </location>
    <ligand>
        <name>Mg(2+)</name>
        <dbReference type="ChEBI" id="CHEBI:18420"/>
    </ligand>
</feature>
<feature type="binding site" evidence="1">
    <location>
        <position position="82"/>
    </location>
    <ligand>
        <name>3-methyl-2-oxobutanoate</name>
        <dbReference type="ChEBI" id="CHEBI:11851"/>
    </ligand>
</feature>
<feature type="binding site" evidence="1">
    <location>
        <position position="82"/>
    </location>
    <ligand>
        <name>Mg(2+)</name>
        <dbReference type="ChEBI" id="CHEBI:18420"/>
    </ligand>
</feature>
<feature type="binding site" evidence="1">
    <location>
        <position position="110"/>
    </location>
    <ligand>
        <name>3-methyl-2-oxobutanoate</name>
        <dbReference type="ChEBI" id="CHEBI:11851"/>
    </ligand>
</feature>
<feature type="binding site" evidence="1">
    <location>
        <position position="112"/>
    </location>
    <ligand>
        <name>Mg(2+)</name>
        <dbReference type="ChEBI" id="CHEBI:18420"/>
    </ligand>
</feature>
<dbReference type="EC" id="2.1.2.11" evidence="1"/>
<dbReference type="EMBL" id="CP000323">
    <property type="protein sequence ID" value="ABE73909.1"/>
    <property type="molecule type" value="Genomic_DNA"/>
</dbReference>
<dbReference type="RefSeq" id="WP_011512500.1">
    <property type="nucleotide sequence ID" value="NC_007969.1"/>
</dbReference>
<dbReference type="SMR" id="Q1QEJ4"/>
<dbReference type="STRING" id="335284.Pcryo_0125"/>
<dbReference type="KEGG" id="pcr:Pcryo_0125"/>
<dbReference type="eggNOG" id="COG0413">
    <property type="taxonomic scope" value="Bacteria"/>
</dbReference>
<dbReference type="HOGENOM" id="CLU_036645_1_0_6"/>
<dbReference type="UniPathway" id="UPA00028">
    <property type="reaction ID" value="UER00003"/>
</dbReference>
<dbReference type="Proteomes" id="UP000002425">
    <property type="component" value="Chromosome"/>
</dbReference>
<dbReference type="GO" id="GO:0005737">
    <property type="term" value="C:cytoplasm"/>
    <property type="evidence" value="ECO:0007669"/>
    <property type="project" value="UniProtKB-SubCell"/>
</dbReference>
<dbReference type="GO" id="GO:0003864">
    <property type="term" value="F:3-methyl-2-oxobutanoate hydroxymethyltransferase activity"/>
    <property type="evidence" value="ECO:0007669"/>
    <property type="project" value="UniProtKB-UniRule"/>
</dbReference>
<dbReference type="GO" id="GO:0000287">
    <property type="term" value="F:magnesium ion binding"/>
    <property type="evidence" value="ECO:0007669"/>
    <property type="project" value="TreeGrafter"/>
</dbReference>
<dbReference type="GO" id="GO:0015940">
    <property type="term" value="P:pantothenate biosynthetic process"/>
    <property type="evidence" value="ECO:0007669"/>
    <property type="project" value="UniProtKB-UniRule"/>
</dbReference>
<dbReference type="CDD" id="cd06557">
    <property type="entry name" value="KPHMT-like"/>
    <property type="match status" value="1"/>
</dbReference>
<dbReference type="FunFam" id="3.20.20.60:FF:000003">
    <property type="entry name" value="3-methyl-2-oxobutanoate hydroxymethyltransferase"/>
    <property type="match status" value="1"/>
</dbReference>
<dbReference type="Gene3D" id="3.20.20.60">
    <property type="entry name" value="Phosphoenolpyruvate-binding domains"/>
    <property type="match status" value="1"/>
</dbReference>
<dbReference type="HAMAP" id="MF_00156">
    <property type="entry name" value="PanB"/>
    <property type="match status" value="1"/>
</dbReference>
<dbReference type="InterPro" id="IPR003700">
    <property type="entry name" value="Pantoate_hydroxy_MeTrfase"/>
</dbReference>
<dbReference type="InterPro" id="IPR015813">
    <property type="entry name" value="Pyrv/PenolPyrv_kinase-like_dom"/>
</dbReference>
<dbReference type="InterPro" id="IPR040442">
    <property type="entry name" value="Pyrv_kinase-like_dom_sf"/>
</dbReference>
<dbReference type="NCBIfam" id="TIGR00222">
    <property type="entry name" value="panB"/>
    <property type="match status" value="1"/>
</dbReference>
<dbReference type="NCBIfam" id="NF001452">
    <property type="entry name" value="PRK00311.1"/>
    <property type="match status" value="1"/>
</dbReference>
<dbReference type="PANTHER" id="PTHR20881">
    <property type="entry name" value="3-METHYL-2-OXOBUTANOATE HYDROXYMETHYLTRANSFERASE"/>
    <property type="match status" value="1"/>
</dbReference>
<dbReference type="PANTHER" id="PTHR20881:SF0">
    <property type="entry name" value="3-METHYL-2-OXOBUTANOATE HYDROXYMETHYLTRANSFERASE"/>
    <property type="match status" value="1"/>
</dbReference>
<dbReference type="Pfam" id="PF02548">
    <property type="entry name" value="Pantoate_transf"/>
    <property type="match status" value="1"/>
</dbReference>
<dbReference type="PIRSF" id="PIRSF000388">
    <property type="entry name" value="Pantoate_hydroxy_MeTrfase"/>
    <property type="match status" value="1"/>
</dbReference>
<dbReference type="SUPFAM" id="SSF51621">
    <property type="entry name" value="Phosphoenolpyruvate/pyruvate domain"/>
    <property type="match status" value="1"/>
</dbReference>
<proteinExistence type="inferred from homology"/>
<protein>
    <recommendedName>
        <fullName evidence="1">3-methyl-2-oxobutanoate hydroxymethyltransferase</fullName>
        <ecNumber evidence="1">2.1.2.11</ecNumber>
    </recommendedName>
    <alternativeName>
        <fullName evidence="1">Ketopantoate hydroxymethyltransferase</fullName>
        <shortName evidence="1">KPHMT</shortName>
    </alternativeName>
</protein>
<reference key="1">
    <citation type="submission" date="2006-03" db="EMBL/GenBank/DDBJ databases">
        <title>Complete sequence of chromosome of Psychrobacter cryohalolentis K5.</title>
        <authorList>
            <consortium name="US DOE Joint Genome Institute"/>
            <person name="Copeland A."/>
            <person name="Lucas S."/>
            <person name="Lapidus A."/>
            <person name="Barry K."/>
            <person name="Detter J.C."/>
            <person name="Glavina T."/>
            <person name="Hammon N."/>
            <person name="Israni S."/>
            <person name="Dalin E."/>
            <person name="Tice H."/>
            <person name="Pitluck S."/>
            <person name="Brettin T."/>
            <person name="Bruce D."/>
            <person name="Han C."/>
            <person name="Tapia R."/>
            <person name="Sims D.R."/>
            <person name="Gilna P."/>
            <person name="Schmutz J."/>
            <person name="Larimer F."/>
            <person name="Land M."/>
            <person name="Hauser L."/>
            <person name="Kyrpides N."/>
            <person name="Kim E."/>
            <person name="Richardson P."/>
        </authorList>
    </citation>
    <scope>NUCLEOTIDE SEQUENCE [LARGE SCALE GENOMIC DNA]</scope>
    <source>
        <strain>ATCC BAA-1226 / DSM 17306 / VKM B-2378 / K5</strain>
    </source>
</reference>
<name>PANB_PSYCK</name>
<evidence type="ECO:0000255" key="1">
    <source>
        <dbReference type="HAMAP-Rule" id="MF_00156"/>
    </source>
</evidence>
<accession>Q1QEJ4</accession>